<protein>
    <recommendedName>
        <fullName>DNA-directed RNA polymerase 2B, chloroplastic/mitochondrial</fullName>
        <ecNumber>2.7.7.6</ecNumber>
    </recommendedName>
    <alternativeName>
        <fullName>NictaRpoT2-tom</fullName>
    </alternativeName>
    <alternativeName>
        <fullName>T7 bacteriophage-type single subunit RNA polymerase 2B</fullName>
    </alternativeName>
</protein>
<feature type="transit peptide" description="Chloroplast and mitochondrion">
    <location>
        <begin position="1"/>
        <end status="unknown"/>
    </location>
</feature>
<feature type="chain" id="PRO_0000046034" description="DNA-directed RNA polymerase 2B, chloroplastic/mitochondrial">
    <location>
        <begin status="unknown"/>
        <end position="1021"/>
    </location>
</feature>
<feature type="region of interest" description="Disordered" evidence="4">
    <location>
        <begin position="315"/>
        <end position="337"/>
    </location>
</feature>
<feature type="active site" evidence="1">
    <location>
        <position position="722"/>
    </location>
</feature>
<feature type="active site" evidence="1">
    <location>
        <position position="797"/>
    </location>
</feature>
<feature type="active site" evidence="1">
    <location>
        <position position="954"/>
    </location>
</feature>
<sequence length="1021" mass="116163">MSSTKTPISLTIKLNQFTDKPTGLDINRYHNSPIMWRNIIKQLSSRTPQKLLFSSKNRTYSFLGFGQDSVFKDNTKFRSLIPISCSNIVMGFQNLGEYLPGDEFLSRPLLKNQVNSNDFCCRKSYASVAEAVAVSSTDAEEDVSVVDEVQELLTELKKEEKKQFAFRRRKQRMLTSGMGHRKYQTLKRRQVKVETEAWEQAAKEYKELLFDMCEQKLAPNLPYVKSLFLGWFEPLRDKIAEEQELCSQGKSKAAYAKYLYQLPADMMAVITMHKLMGLLMTGGDHGTARVVQAALVIGDAIEQEVRIHNFLEKTKKQKAEKDKQKEDGEHVTQEQEKLRKKVTNLMKKQKLRAVGQIVRRQDDSKPWGQDAKAKVGSRLIELLLQTAYIQPPANQLAVDPPDIRPAFLHSVRTVAKETKSASRRYGIIQCDELVFKGLERTARHMVIPYMPMLVPPVKWTGYDKGGHLYLPSYVMRTHGARQQREAVKRASRNQLQPVFEALDTLGSTKWRINKRVLSVIDRIWAGGGRLADLVDRDDAPLPEEPDTEDEALRTKWRWKVKSVKKENRERHSQRCDIELKLAVARKMKDEEGFFYPHNVDFRGRAYPMHPHLNHLGSDICRGVLVFAEGRPLGESGLRWLKIHLANLFAGGVEKLSLEGRIAFTENHMDDIFDSADKPLEGRRWWLNAEDPFQCLAVCINLSEAVRSSSPETSISHIPVHQDGSCNGLQHYAALGRDELGAAAVNLVAGEKPADVYSGIAARVLDIMKRDAQRDPAEFPDAVRARALVNQVDRKLVKQTVMTSVYGVTYIGARDQIKRRLKERGAIADDSELFGAACYAAKVTLTALGEMFEAARSIMTWLGECAKIIASENEPVRWTTPLGLPVVQPYRKIGRHLIKTSLQILTLQQETEKVMVKRQRTAFPPNFIHSLDGSHMMMTAVACRRAGLNFAGVHDSYWTHACDVDKLNRILREKFVELYETPILEKLLESFQTSYPTLLFPPLPERGDFDLRDVLESPYFFN</sequence>
<organism>
    <name type="scientific">Nicotiana tabacum</name>
    <name type="common">Common tobacco</name>
    <dbReference type="NCBI Taxonomy" id="4097"/>
    <lineage>
        <taxon>Eukaryota</taxon>
        <taxon>Viridiplantae</taxon>
        <taxon>Streptophyta</taxon>
        <taxon>Embryophyta</taxon>
        <taxon>Tracheophyta</taxon>
        <taxon>Spermatophyta</taxon>
        <taxon>Magnoliopsida</taxon>
        <taxon>eudicotyledons</taxon>
        <taxon>Gunneridae</taxon>
        <taxon>Pentapetalae</taxon>
        <taxon>asterids</taxon>
        <taxon>lamiids</taxon>
        <taxon>Solanales</taxon>
        <taxon>Solanaceae</taxon>
        <taxon>Nicotianoideae</taxon>
        <taxon>Nicotianeae</taxon>
        <taxon>Nicotiana</taxon>
    </lineage>
</organism>
<dbReference type="EC" id="2.7.7.6"/>
<dbReference type="EMBL" id="AJ416569">
    <property type="protein sequence ID" value="CAC95020.1"/>
    <property type="molecule type" value="mRNA"/>
</dbReference>
<dbReference type="EMBL" id="AJ416573">
    <property type="protein sequence ID" value="CAC95024.1"/>
    <property type="molecule type" value="Genomic_DNA"/>
</dbReference>
<dbReference type="RefSeq" id="NP_001311818.1">
    <property type="nucleotide sequence ID" value="NM_001324889.1"/>
</dbReference>
<dbReference type="SMR" id="Q8L6J3"/>
<dbReference type="STRING" id="4097.Q8L6J3"/>
<dbReference type="PaxDb" id="4097-Q8L6J3"/>
<dbReference type="GeneID" id="107765810"/>
<dbReference type="KEGG" id="nta:107765810"/>
<dbReference type="OrthoDB" id="276422at2759"/>
<dbReference type="Proteomes" id="UP000084051">
    <property type="component" value="Unplaced"/>
</dbReference>
<dbReference type="GO" id="GO:0009507">
    <property type="term" value="C:chloroplast"/>
    <property type="evidence" value="ECO:0007669"/>
    <property type="project" value="UniProtKB-SubCell"/>
</dbReference>
<dbReference type="GO" id="GO:0034245">
    <property type="term" value="C:mitochondrial DNA-directed RNA polymerase complex"/>
    <property type="evidence" value="ECO:0000318"/>
    <property type="project" value="GO_Central"/>
</dbReference>
<dbReference type="GO" id="GO:0003677">
    <property type="term" value="F:DNA binding"/>
    <property type="evidence" value="ECO:0007669"/>
    <property type="project" value="InterPro"/>
</dbReference>
<dbReference type="GO" id="GO:0003899">
    <property type="term" value="F:DNA-directed RNA polymerase activity"/>
    <property type="evidence" value="ECO:0000318"/>
    <property type="project" value="GO_Central"/>
</dbReference>
<dbReference type="GO" id="GO:0006390">
    <property type="term" value="P:mitochondrial transcription"/>
    <property type="evidence" value="ECO:0000318"/>
    <property type="project" value="GO_Central"/>
</dbReference>
<dbReference type="FunFam" id="1.10.1320.10:FF:000001">
    <property type="entry name" value="DNA-directed RNA polymerase"/>
    <property type="match status" value="1"/>
</dbReference>
<dbReference type="FunFam" id="1.10.150.20:FF:000027">
    <property type="entry name" value="DNA-directed RNA polymerase"/>
    <property type="match status" value="1"/>
</dbReference>
<dbReference type="FunFam" id="1.10.287.260:FF:000001">
    <property type="entry name" value="DNA-directed RNA polymerase"/>
    <property type="match status" value="1"/>
</dbReference>
<dbReference type="FunFam" id="1.10.287.280:FF:000001">
    <property type="entry name" value="DNA-directed RNA polymerase"/>
    <property type="match status" value="1"/>
</dbReference>
<dbReference type="Gene3D" id="1.10.287.260">
    <property type="match status" value="1"/>
</dbReference>
<dbReference type="Gene3D" id="1.10.287.280">
    <property type="match status" value="1"/>
</dbReference>
<dbReference type="Gene3D" id="1.10.150.20">
    <property type="entry name" value="5' to 3' exonuclease, C-terminal subdomain"/>
    <property type="match status" value="1"/>
</dbReference>
<dbReference type="Gene3D" id="1.10.1320.10">
    <property type="entry name" value="DNA-directed RNA polymerase, N-terminal domain"/>
    <property type="match status" value="1"/>
</dbReference>
<dbReference type="InterPro" id="IPR024075">
    <property type="entry name" value="DNA-dir_RNA_pol_helix_hairp_sf"/>
</dbReference>
<dbReference type="InterPro" id="IPR046950">
    <property type="entry name" value="DNA-dir_Rpol_C_phage-type"/>
</dbReference>
<dbReference type="InterPro" id="IPR002092">
    <property type="entry name" value="DNA-dir_Rpol_phage-type"/>
</dbReference>
<dbReference type="InterPro" id="IPR043502">
    <property type="entry name" value="DNA/RNA_pol_sf"/>
</dbReference>
<dbReference type="InterPro" id="IPR037159">
    <property type="entry name" value="RNA_POL_N_sf"/>
</dbReference>
<dbReference type="InterPro" id="IPR029262">
    <property type="entry name" value="RPOL_N"/>
</dbReference>
<dbReference type="PANTHER" id="PTHR10102">
    <property type="entry name" value="DNA-DIRECTED RNA POLYMERASE, MITOCHONDRIAL"/>
    <property type="match status" value="1"/>
</dbReference>
<dbReference type="PANTHER" id="PTHR10102:SF0">
    <property type="entry name" value="DNA-DIRECTED RNA POLYMERASE, MITOCHONDRIAL"/>
    <property type="match status" value="1"/>
</dbReference>
<dbReference type="Pfam" id="PF00940">
    <property type="entry name" value="RNA_pol"/>
    <property type="match status" value="1"/>
</dbReference>
<dbReference type="Pfam" id="PF14700">
    <property type="entry name" value="RPOL_N"/>
    <property type="match status" value="1"/>
</dbReference>
<dbReference type="SMART" id="SM01311">
    <property type="entry name" value="RPOL_N"/>
    <property type="match status" value="1"/>
</dbReference>
<dbReference type="SUPFAM" id="SSF56672">
    <property type="entry name" value="DNA/RNA polymerases"/>
    <property type="match status" value="1"/>
</dbReference>
<dbReference type="PROSITE" id="PS00900">
    <property type="entry name" value="RNA_POL_PHAGE_1"/>
    <property type="match status" value="1"/>
</dbReference>
<dbReference type="PROSITE" id="PS00489">
    <property type="entry name" value="RNA_POL_PHAGE_2"/>
    <property type="match status" value="1"/>
</dbReference>
<comment type="function">
    <text>DNA-dependent RNA polymerase catalyzes the transcription of DNA into RNA using the four ribonucleoside triphosphates as substrates.</text>
</comment>
<comment type="catalytic activity">
    <reaction evidence="2 3">
        <text>RNA(n) + a ribonucleoside 5'-triphosphate = RNA(n+1) + diphosphate</text>
        <dbReference type="Rhea" id="RHEA:21248"/>
        <dbReference type="Rhea" id="RHEA-COMP:14527"/>
        <dbReference type="Rhea" id="RHEA-COMP:17342"/>
        <dbReference type="ChEBI" id="CHEBI:33019"/>
        <dbReference type="ChEBI" id="CHEBI:61557"/>
        <dbReference type="ChEBI" id="CHEBI:140395"/>
        <dbReference type="EC" id="2.7.7.6"/>
    </reaction>
</comment>
<comment type="subcellular location">
    <subcellularLocation>
        <location evidence="5">Plastid</location>
        <location evidence="5">Chloroplast</location>
    </subcellularLocation>
    <subcellularLocation>
        <location evidence="5">Mitochondrion</location>
    </subcellularLocation>
</comment>
<comment type="similarity">
    <text evidence="6">Belongs to the phage and mitochondrial RNA polymerase family.</text>
</comment>
<name>RPO2B_TOBAC</name>
<reference key="1">
    <citation type="journal article" date="2002" name="Plant J.">
        <title>Six active phage-type RNA polymerase genes in Nicotiana tabacum.</title>
        <authorList>
            <person name="Hedtke B."/>
            <person name="Legen J."/>
            <person name="Weihe A."/>
            <person name="Herrmann R.G."/>
            <person name="Boerner T."/>
        </authorList>
    </citation>
    <scope>NUCLEOTIDE SEQUENCE [GENOMIC DNA / MRNA]</scope>
    <scope>SUBCELLULAR LOCATION</scope>
</reference>
<evidence type="ECO:0000250" key="1"/>
<evidence type="ECO:0000255" key="2">
    <source>
        <dbReference type="PROSITE-ProRule" id="PRU10031"/>
    </source>
</evidence>
<evidence type="ECO:0000255" key="3">
    <source>
        <dbReference type="PROSITE-ProRule" id="PRU10032"/>
    </source>
</evidence>
<evidence type="ECO:0000256" key="4">
    <source>
        <dbReference type="SAM" id="MobiDB-lite"/>
    </source>
</evidence>
<evidence type="ECO:0000269" key="5">
    <source>
    </source>
</evidence>
<evidence type="ECO:0000305" key="6"/>
<proteinExistence type="evidence at transcript level"/>
<keyword id="KW-0150">Chloroplast</keyword>
<keyword id="KW-0240">DNA-directed RNA polymerase</keyword>
<keyword id="KW-0496">Mitochondrion</keyword>
<keyword id="KW-0548">Nucleotidyltransferase</keyword>
<keyword id="KW-0934">Plastid</keyword>
<keyword id="KW-1185">Reference proteome</keyword>
<keyword id="KW-0804">Transcription</keyword>
<keyword id="KW-0808">Transferase</keyword>
<keyword id="KW-0809">Transit peptide</keyword>
<accession>Q8L6J3</accession>
<accession>Q8L6J7</accession>
<gene>
    <name type="primary">RPOT2-TOM</name>
</gene>